<name>CMT_YEASX</name>
<reference key="1">
    <citation type="journal article" date="2014" name="Biochim. Biophys. Acta">
        <title>Purification, characterization, sequencing and molecular cloning of a novel cysteine methyltransferase that regulates trehalose-6-phosphate synthase from Saccharomyces cerevisiae.</title>
        <authorList>
            <person name="Sengupta S."/>
            <person name="Banerjee S."/>
            <person name="Lahiri S."/>
            <person name="Dutta T."/>
            <person name="Dhar T.K."/>
            <person name="Ghosh A.K."/>
        </authorList>
    </citation>
    <scope>PROTEIN SEQUENCE</scope>
    <scope>NUCLEOTIDE SEQUENCE [MRNA]</scope>
    <scope>FUNCTION</scope>
    <scope>CATALYTIC ACTIVITY</scope>
    <scope>BIOPHYSICOCHEMICAL PROPERTIES</scope>
    <scope>MASS SPECTROMETRY</scope>
    <scope>DISRUPTION PHENOTYPE</scope>
    <source>
        <strain>8534-10A x 6460-8D</strain>
    </source>
</reference>
<dbReference type="EC" id="2.1.1.318" evidence="1"/>
<dbReference type="EMBL" id="JX072966">
    <property type="protein sequence ID" value="AFN42196.3"/>
    <property type="molecule type" value="mRNA"/>
</dbReference>
<dbReference type="KEGG" id="ag:AFN42196"/>
<dbReference type="BioCyc" id="MetaCyc:MONOMER-19208"/>
<dbReference type="BRENDA" id="2.1.1.318">
    <property type="organism ID" value="984"/>
</dbReference>
<dbReference type="GO" id="GO:0008168">
    <property type="term" value="F:methyltransferase activity"/>
    <property type="evidence" value="ECO:0007669"/>
    <property type="project" value="UniProtKB-KW"/>
</dbReference>
<dbReference type="GO" id="GO:0032259">
    <property type="term" value="P:methylation"/>
    <property type="evidence" value="ECO:0007669"/>
    <property type="project" value="UniProtKB-KW"/>
</dbReference>
<sequence length="130" mass="14631">MIHCKVQQWSPQYLRLPATGYEELTLTLNTSMLARMPEEEDQLFLVVGDSPSSTYVDWGEDCNSTRYPSYDHCTHKILYLGASAGTTRSKRLSATIGIRLSKGTGSNNVLGTPMYLLYNEMKTRIIESSK</sequence>
<keyword id="KW-0903">Direct protein sequencing</keyword>
<keyword id="KW-0489">Methyltransferase</keyword>
<keyword id="KW-0949">S-adenosyl-L-methionine</keyword>
<keyword id="KW-0808">Transferase</keyword>
<comment type="function">
    <text evidence="1">S-adenosyl-L-methionine-dependent protein-cysteine S-methyltransferase with broad substrate specificity. Methylates trehalose-6-phosphate synthase (TPS), enhancing its enzymatic activity and promoting trehalose synthesis upon entry of cells into stationary phase.</text>
</comment>
<comment type="catalytic activity">
    <reaction evidence="1">
        <text>[trehalose-6-phosphate synthase]-L-cysteine + S-adenosyl-L-methionine = [trehalose-6-phosphate synthase]-S-methyl-L-cysteine + S-adenosyl-L-homocysteine + H(+)</text>
        <dbReference type="Rhea" id="RHEA:46808"/>
        <dbReference type="Rhea" id="RHEA-COMP:11665"/>
        <dbReference type="Rhea" id="RHEA-COMP:11666"/>
        <dbReference type="ChEBI" id="CHEBI:15378"/>
        <dbReference type="ChEBI" id="CHEBI:29950"/>
        <dbReference type="ChEBI" id="CHEBI:57856"/>
        <dbReference type="ChEBI" id="CHEBI:59789"/>
        <dbReference type="ChEBI" id="CHEBI:82612"/>
        <dbReference type="EC" id="2.1.1.318"/>
    </reaction>
</comment>
<comment type="biophysicochemical properties">
    <kinetics>
        <KM evidence="1">4.95 uM for S-adenosyl-L-methionine</KM>
        <Vmax evidence="1">3.2 umol/min/mg enzyme</Vmax>
    </kinetics>
    <phDependence>
        <text evidence="1">Optimum pH is 7.</text>
    </phDependence>
    <temperatureDependence>
        <text evidence="1">Optimum temperature is 30 degrees Celsius.</text>
    </temperatureDependence>
</comment>
<comment type="mass spectrometry" mass="13680.0" method="MALDI" evidence="1"/>
<comment type="disruption phenotype">
    <text evidence="1">Exhibits almost 50% reduction in intracellular trehalose concentration.</text>
</comment>
<protein>
    <recommendedName>
        <fullName evidence="2">Cysteine methyltransferase</fullName>
        <shortName evidence="2">CMT</shortName>
        <ecNumber evidence="1">2.1.1.318</ecNumber>
    </recommendedName>
</protein>
<proteinExistence type="evidence at protein level"/>
<evidence type="ECO:0000269" key="1">
    <source>
    </source>
</evidence>
<evidence type="ECO:0000303" key="2">
    <source>
    </source>
</evidence>
<organism>
    <name type="scientific">Saccharomyces cerevisiae</name>
    <name type="common">Baker's yeast</name>
    <dbReference type="NCBI Taxonomy" id="4932"/>
    <lineage>
        <taxon>Eukaryota</taxon>
        <taxon>Fungi</taxon>
        <taxon>Dikarya</taxon>
        <taxon>Ascomycota</taxon>
        <taxon>Saccharomycotina</taxon>
        <taxon>Saccharomycetes</taxon>
        <taxon>Saccharomycetales</taxon>
        <taxon>Saccharomycetaceae</taxon>
        <taxon>Saccharomyces</taxon>
    </lineage>
</organism>
<feature type="chain" id="PRO_0000434724" description="Cysteine methyltransferase">
    <location>
        <begin position="1"/>
        <end position="130"/>
    </location>
</feature>
<accession>I6WHP7</accession>